<sequence>MDKSKRLFTKSKRSFRRRLPPIQSGDRIDYRNMSLISRFISEQGKILSRRVNRLTLKQQRLITIAIKQARILSSLPFLNNEKQFERSESTTKTTGLRTRNK</sequence>
<name>RR18_CARPA</name>
<evidence type="ECO:0000255" key="1">
    <source>
        <dbReference type="HAMAP-Rule" id="MF_00270"/>
    </source>
</evidence>
<evidence type="ECO:0000305" key="2"/>
<dbReference type="EMBL" id="EU431223">
    <property type="protein sequence ID" value="ABY86804.1"/>
    <property type="molecule type" value="Genomic_DNA"/>
</dbReference>
<dbReference type="RefSeq" id="YP_001671705.1">
    <property type="nucleotide sequence ID" value="NC_010323.1"/>
</dbReference>
<dbReference type="SMR" id="B1A957"/>
<dbReference type="GeneID" id="5878322"/>
<dbReference type="KEGG" id="cpap:5878322"/>
<dbReference type="OrthoDB" id="1058819at2759"/>
<dbReference type="GO" id="GO:0009507">
    <property type="term" value="C:chloroplast"/>
    <property type="evidence" value="ECO:0007669"/>
    <property type="project" value="UniProtKB-SubCell"/>
</dbReference>
<dbReference type="GO" id="GO:0005763">
    <property type="term" value="C:mitochondrial small ribosomal subunit"/>
    <property type="evidence" value="ECO:0007669"/>
    <property type="project" value="TreeGrafter"/>
</dbReference>
<dbReference type="GO" id="GO:0070181">
    <property type="term" value="F:small ribosomal subunit rRNA binding"/>
    <property type="evidence" value="ECO:0007669"/>
    <property type="project" value="TreeGrafter"/>
</dbReference>
<dbReference type="GO" id="GO:0003735">
    <property type="term" value="F:structural constituent of ribosome"/>
    <property type="evidence" value="ECO:0007669"/>
    <property type="project" value="InterPro"/>
</dbReference>
<dbReference type="GO" id="GO:0006412">
    <property type="term" value="P:translation"/>
    <property type="evidence" value="ECO:0007669"/>
    <property type="project" value="UniProtKB-UniRule"/>
</dbReference>
<dbReference type="FunFam" id="4.10.640.10:FF:000002">
    <property type="entry name" value="30S ribosomal protein S18, chloroplastic"/>
    <property type="match status" value="1"/>
</dbReference>
<dbReference type="Gene3D" id="4.10.640.10">
    <property type="entry name" value="Ribosomal protein S18"/>
    <property type="match status" value="1"/>
</dbReference>
<dbReference type="HAMAP" id="MF_00270">
    <property type="entry name" value="Ribosomal_bS18"/>
    <property type="match status" value="1"/>
</dbReference>
<dbReference type="InterPro" id="IPR001648">
    <property type="entry name" value="Ribosomal_bS18"/>
</dbReference>
<dbReference type="InterPro" id="IPR018275">
    <property type="entry name" value="Ribosomal_bS18_CS"/>
</dbReference>
<dbReference type="InterPro" id="IPR036870">
    <property type="entry name" value="Ribosomal_bS18_sf"/>
</dbReference>
<dbReference type="NCBIfam" id="TIGR00165">
    <property type="entry name" value="S18"/>
    <property type="match status" value="1"/>
</dbReference>
<dbReference type="PANTHER" id="PTHR13479">
    <property type="entry name" value="30S RIBOSOMAL PROTEIN S18"/>
    <property type="match status" value="1"/>
</dbReference>
<dbReference type="PANTHER" id="PTHR13479:SF40">
    <property type="entry name" value="SMALL RIBOSOMAL SUBUNIT PROTEIN BS18M"/>
    <property type="match status" value="1"/>
</dbReference>
<dbReference type="Pfam" id="PF01084">
    <property type="entry name" value="Ribosomal_S18"/>
    <property type="match status" value="1"/>
</dbReference>
<dbReference type="PRINTS" id="PR00974">
    <property type="entry name" value="RIBOSOMALS18"/>
</dbReference>
<dbReference type="SUPFAM" id="SSF46911">
    <property type="entry name" value="Ribosomal protein S18"/>
    <property type="match status" value="1"/>
</dbReference>
<dbReference type="PROSITE" id="PS00057">
    <property type="entry name" value="RIBOSOMAL_S18"/>
    <property type="match status" value="1"/>
</dbReference>
<reference key="1">
    <citation type="journal article" date="2008" name="Nature">
        <title>The draft genome of the transgenic tropical fruit tree papaya (Carica papaya Linnaeus).</title>
        <authorList>
            <person name="Ming R."/>
            <person name="Hou S."/>
            <person name="Feng Y."/>
            <person name="Yu Q."/>
            <person name="Dionne-Laporte A."/>
            <person name="Saw J.H."/>
            <person name="Senin P."/>
            <person name="Wang W."/>
            <person name="Ly B.V."/>
            <person name="Lewis K.L."/>
            <person name="Salzberg S.L."/>
            <person name="Feng L."/>
            <person name="Jones M.R."/>
            <person name="Skelton R.L."/>
            <person name="Murray J.E."/>
            <person name="Chen C."/>
            <person name="Qian W."/>
            <person name="Shen J."/>
            <person name="Du P."/>
            <person name="Eustice M."/>
            <person name="Tong E."/>
            <person name="Tang H."/>
            <person name="Lyons E."/>
            <person name="Paull R.E."/>
            <person name="Michael T.P."/>
            <person name="Wall K."/>
            <person name="Rice D.W."/>
            <person name="Albert H."/>
            <person name="Wang M.L."/>
            <person name="Zhu Y.J."/>
            <person name="Schatz M."/>
            <person name="Nagarajan N."/>
            <person name="Acob R.A."/>
            <person name="Guan P."/>
            <person name="Blas A."/>
            <person name="Wai C.M."/>
            <person name="Ackerman C.M."/>
            <person name="Ren Y."/>
            <person name="Liu C."/>
            <person name="Wang J."/>
            <person name="Wang J."/>
            <person name="Na J.K."/>
            <person name="Shakirov E.V."/>
            <person name="Haas B."/>
            <person name="Thimmapuram J."/>
            <person name="Nelson D."/>
            <person name="Wang X."/>
            <person name="Bowers J.E."/>
            <person name="Gschwend A.R."/>
            <person name="Delcher A.L."/>
            <person name="Singh R."/>
            <person name="Suzuki J.Y."/>
            <person name="Tripathi S."/>
            <person name="Neupane K."/>
            <person name="Wei H."/>
            <person name="Irikura B."/>
            <person name="Paidi M."/>
            <person name="Jiang N."/>
            <person name="Zhang W."/>
            <person name="Presting G."/>
            <person name="Windsor A."/>
            <person name="Navajas-Perez R."/>
            <person name="Torres M.J."/>
            <person name="Feltus F.A."/>
            <person name="Porter B."/>
            <person name="Li Y."/>
            <person name="Burroughs A.M."/>
            <person name="Luo M.C."/>
            <person name="Liu L."/>
            <person name="Christopher D.A."/>
            <person name="Mount S.M."/>
            <person name="Moore P.H."/>
            <person name="Sugimura T."/>
            <person name="Jiang J."/>
            <person name="Schuler M.A."/>
            <person name="Friedman V."/>
            <person name="Mitchell-Olds T."/>
            <person name="Shippen D.E."/>
            <person name="dePamphilis C.W."/>
            <person name="Palmer J.D."/>
            <person name="Freeling M."/>
            <person name="Paterson A.H."/>
            <person name="Gonsalves D."/>
            <person name="Wang L."/>
            <person name="Alam M."/>
        </authorList>
    </citation>
    <scope>NUCLEOTIDE SEQUENCE [LARGE SCALE GENOMIC DNA]</scope>
    <source>
        <strain>cv. SunUp</strain>
    </source>
</reference>
<feature type="chain" id="PRO_0000345572" description="Small ribosomal subunit protein bS18c">
    <location>
        <begin position="1"/>
        <end position="101"/>
    </location>
</feature>
<geneLocation type="chloroplast"/>
<gene>
    <name evidence="1" type="primary">rps18</name>
</gene>
<accession>B1A957</accession>
<comment type="subunit">
    <text evidence="1">Part of the 30S ribosomal subunit.</text>
</comment>
<comment type="subcellular location">
    <subcellularLocation>
        <location>Plastid</location>
        <location>Chloroplast</location>
    </subcellularLocation>
</comment>
<comment type="similarity">
    <text evidence="1">Belongs to the bacterial ribosomal protein bS18 family.</text>
</comment>
<proteinExistence type="inferred from homology"/>
<protein>
    <recommendedName>
        <fullName evidence="1">Small ribosomal subunit protein bS18c</fullName>
    </recommendedName>
    <alternativeName>
        <fullName evidence="2">30S ribosomal protein S18, chloroplastic</fullName>
    </alternativeName>
</protein>
<organism>
    <name type="scientific">Carica papaya</name>
    <name type="common">Papaya</name>
    <dbReference type="NCBI Taxonomy" id="3649"/>
    <lineage>
        <taxon>Eukaryota</taxon>
        <taxon>Viridiplantae</taxon>
        <taxon>Streptophyta</taxon>
        <taxon>Embryophyta</taxon>
        <taxon>Tracheophyta</taxon>
        <taxon>Spermatophyta</taxon>
        <taxon>Magnoliopsida</taxon>
        <taxon>eudicotyledons</taxon>
        <taxon>Gunneridae</taxon>
        <taxon>Pentapetalae</taxon>
        <taxon>rosids</taxon>
        <taxon>malvids</taxon>
        <taxon>Brassicales</taxon>
        <taxon>Caricaceae</taxon>
        <taxon>Carica</taxon>
    </lineage>
</organism>
<keyword id="KW-0150">Chloroplast</keyword>
<keyword id="KW-0934">Plastid</keyword>
<keyword id="KW-0687">Ribonucleoprotein</keyword>
<keyword id="KW-0689">Ribosomal protein</keyword>
<keyword id="KW-0694">RNA-binding</keyword>
<keyword id="KW-0699">rRNA-binding</keyword>